<dbReference type="EC" id="1.2.1.44" evidence="4 5"/>
<dbReference type="EC" id="1.2.1.-" evidence="4 5"/>
<dbReference type="EMBL" id="CM001220">
    <property type="protein sequence ID" value="AES86435.1"/>
    <property type="molecule type" value="Genomic_DNA"/>
</dbReference>
<dbReference type="EMBL" id="PSQE01000004">
    <property type="protein sequence ID" value="RHN58334.1"/>
    <property type="molecule type" value="Genomic_DNA"/>
</dbReference>
<dbReference type="EMBL" id="BT141308">
    <property type="protein sequence ID" value="AFK41102.1"/>
    <property type="molecule type" value="mRNA"/>
</dbReference>
<dbReference type="EMBL" id="BT149337">
    <property type="protein sequence ID" value="AFK49131.1"/>
    <property type="molecule type" value="mRNA"/>
</dbReference>
<dbReference type="RefSeq" id="XP_003604238.1">
    <property type="nucleotide sequence ID" value="XM_003604190.2"/>
</dbReference>
<dbReference type="PDB" id="4R1U">
    <property type="method" value="X-ray"/>
    <property type="resolution" value="2.18 A"/>
    <property type="chains" value="A/B=5-336"/>
</dbReference>
<dbReference type="PDBsum" id="4R1U"/>
<dbReference type="SMR" id="G7JEE5"/>
<dbReference type="STRING" id="3880.G7JEE5"/>
<dbReference type="PaxDb" id="3880-AES86435"/>
<dbReference type="EnsemblPlants" id="rna20237">
    <property type="protein sequence ID" value="RHN58334.1"/>
    <property type="gene ID" value="gene20237"/>
</dbReference>
<dbReference type="GeneID" id="11424763"/>
<dbReference type="Gramene" id="rna20237">
    <property type="protein sequence ID" value="RHN58334.1"/>
    <property type="gene ID" value="gene20237"/>
</dbReference>
<dbReference type="KEGG" id="mtr:11424763"/>
<dbReference type="eggNOG" id="KOG1502">
    <property type="taxonomic scope" value="Eukaryota"/>
</dbReference>
<dbReference type="OMA" id="YYTQMPA"/>
<dbReference type="OrthoDB" id="2735536at2759"/>
<dbReference type="BRENDA" id="1.2.1.44">
    <property type="organism ID" value="3201"/>
</dbReference>
<dbReference type="UniPathway" id="UPA00711"/>
<dbReference type="EvolutionaryTrace" id="G7JEE5"/>
<dbReference type="Proteomes" id="UP000002051">
    <property type="component" value="Chromosome 4"/>
</dbReference>
<dbReference type="Proteomes" id="UP000265566">
    <property type="component" value="Chromosome 4"/>
</dbReference>
<dbReference type="ExpressionAtlas" id="G7JEE5">
    <property type="expression patterns" value="differential"/>
</dbReference>
<dbReference type="GO" id="GO:0005737">
    <property type="term" value="C:cytoplasm"/>
    <property type="evidence" value="ECO:0007669"/>
    <property type="project" value="UniProtKB-SubCell"/>
</dbReference>
<dbReference type="GO" id="GO:0016621">
    <property type="term" value="F:cinnamoyl-CoA reductase activity"/>
    <property type="evidence" value="ECO:0000314"/>
    <property type="project" value="UniProtKB"/>
</dbReference>
<dbReference type="GO" id="GO:0016616">
    <property type="term" value="F:oxidoreductase activity, acting on the CH-OH group of donors, NAD or NADP as acceptor"/>
    <property type="evidence" value="ECO:0000314"/>
    <property type="project" value="UniProtKB"/>
</dbReference>
<dbReference type="GO" id="GO:0009809">
    <property type="term" value="P:lignin biosynthetic process"/>
    <property type="evidence" value="ECO:0000315"/>
    <property type="project" value="UniProtKB"/>
</dbReference>
<dbReference type="GO" id="GO:0009699">
    <property type="term" value="P:phenylpropanoid biosynthetic process"/>
    <property type="evidence" value="ECO:0000314"/>
    <property type="project" value="UniProtKB"/>
</dbReference>
<dbReference type="CDD" id="cd08958">
    <property type="entry name" value="FR_SDR_e"/>
    <property type="match status" value="1"/>
</dbReference>
<dbReference type="FunFam" id="3.40.50.720:FF:000199">
    <property type="entry name" value="Cinnamoyl-CoA reductase 1"/>
    <property type="match status" value="1"/>
</dbReference>
<dbReference type="Gene3D" id="3.40.50.720">
    <property type="entry name" value="NAD(P)-binding Rossmann-like Domain"/>
    <property type="match status" value="1"/>
</dbReference>
<dbReference type="InterPro" id="IPR001509">
    <property type="entry name" value="Epimerase_deHydtase"/>
</dbReference>
<dbReference type="InterPro" id="IPR036291">
    <property type="entry name" value="NAD(P)-bd_dom_sf"/>
</dbReference>
<dbReference type="InterPro" id="IPR050425">
    <property type="entry name" value="NAD(P)_dehydrat-like"/>
</dbReference>
<dbReference type="PANTHER" id="PTHR10366:SF404">
    <property type="entry name" value="CINNAMOYL-COA REDUCTASE 1"/>
    <property type="match status" value="1"/>
</dbReference>
<dbReference type="PANTHER" id="PTHR10366">
    <property type="entry name" value="NAD DEPENDENT EPIMERASE/DEHYDRATASE"/>
    <property type="match status" value="1"/>
</dbReference>
<dbReference type="Pfam" id="PF01370">
    <property type="entry name" value="Epimerase"/>
    <property type="match status" value="1"/>
</dbReference>
<dbReference type="SUPFAM" id="SSF51735">
    <property type="entry name" value="NAD(P)-binding Rossmann-fold domains"/>
    <property type="match status" value="1"/>
</dbReference>
<feature type="chain" id="PRO_0000457412" description="Cinnamoyl-CoA reductase 2">
    <location>
        <begin position="1"/>
        <end position="336"/>
    </location>
</feature>
<feature type="active site" description="Proton donor" evidence="2">
    <location>
        <position position="169"/>
    </location>
</feature>
<feature type="binding site" evidence="1">
    <location>
        <begin position="21"/>
        <end position="27"/>
    </location>
    <ligand>
        <name>NADP(+)</name>
        <dbReference type="ChEBI" id="CHEBI:58349"/>
    </ligand>
</feature>
<feature type="binding site" evidence="1">
    <location>
        <position position="46"/>
    </location>
    <ligand>
        <name>NADP(+)</name>
        <dbReference type="ChEBI" id="CHEBI:58349"/>
    </ligand>
</feature>
<feature type="binding site" evidence="1">
    <location>
        <position position="52"/>
    </location>
    <ligand>
        <name>NADP(+)</name>
        <dbReference type="ChEBI" id="CHEBI:58349"/>
    </ligand>
</feature>
<feature type="binding site" evidence="1">
    <location>
        <begin position="72"/>
        <end position="73"/>
    </location>
    <ligand>
        <name>NADP(+)</name>
        <dbReference type="ChEBI" id="CHEBI:58349"/>
    </ligand>
</feature>
<feature type="binding site" evidence="1">
    <location>
        <begin position="92"/>
        <end position="94"/>
    </location>
    <ligand>
        <name>NADP(+)</name>
        <dbReference type="ChEBI" id="CHEBI:58349"/>
    </ligand>
</feature>
<feature type="binding site" evidence="1">
    <location>
        <position position="165"/>
    </location>
    <ligand>
        <name>NADP(+)</name>
        <dbReference type="ChEBI" id="CHEBI:58349"/>
    </ligand>
</feature>
<feature type="binding site" evidence="1">
    <location>
        <position position="169"/>
    </location>
    <ligand>
        <name>NADP(+)</name>
        <dbReference type="ChEBI" id="CHEBI:58349"/>
    </ligand>
</feature>
<feature type="binding site" evidence="1">
    <location>
        <begin position="192"/>
        <end position="195"/>
    </location>
    <ligand>
        <name>NADP(+)</name>
        <dbReference type="ChEBI" id="CHEBI:58349"/>
    </ligand>
</feature>
<feature type="binding site" evidence="1">
    <location>
        <position position="207"/>
    </location>
    <ligand>
        <name>NADP(+)</name>
        <dbReference type="ChEBI" id="CHEBI:58349"/>
    </ligand>
</feature>
<feature type="disulfide bond" evidence="1">
    <location>
        <begin position="158"/>
        <end position="166"/>
    </location>
</feature>
<feature type="sequence conflict" description="In Ref. 4; AFK49131." evidence="7" ref="4">
    <original>A</original>
    <variation>V</variation>
    <location>
        <position position="3"/>
    </location>
</feature>
<feature type="sequence conflict" description="In Ref. 4; AFK41102." evidence="7" ref="4">
    <original>L</original>
    <variation>F</variation>
    <location>
        <position position="68"/>
    </location>
</feature>
<feature type="sequence conflict" description="In Ref. 4; AFK41102." evidence="7" ref="4">
    <original>P</original>
    <variation>S</variation>
    <location>
        <position position="287"/>
    </location>
</feature>
<feature type="strand" evidence="11">
    <location>
        <begin position="16"/>
        <end position="20"/>
    </location>
</feature>
<feature type="turn" evidence="11">
    <location>
        <begin position="21"/>
        <end position="23"/>
    </location>
</feature>
<feature type="helix" evidence="11">
    <location>
        <begin position="25"/>
        <end position="36"/>
    </location>
</feature>
<feature type="strand" evidence="11">
    <location>
        <begin position="40"/>
        <end position="46"/>
    </location>
</feature>
<feature type="helix" evidence="11">
    <location>
        <begin position="51"/>
        <end position="53"/>
    </location>
</feature>
<feature type="turn" evidence="11">
    <location>
        <begin position="54"/>
        <end position="58"/>
    </location>
</feature>
<feature type="helix" evidence="11">
    <location>
        <begin position="62"/>
        <end position="65"/>
    </location>
</feature>
<feature type="strand" evidence="11">
    <location>
        <begin position="66"/>
        <end position="70"/>
    </location>
</feature>
<feature type="helix" evidence="11">
    <location>
        <begin position="76"/>
        <end position="83"/>
    </location>
</feature>
<feature type="strand" evidence="11">
    <location>
        <begin position="87"/>
        <end position="91"/>
    </location>
</feature>
<feature type="turn" evidence="11">
    <location>
        <begin position="101"/>
        <end position="103"/>
    </location>
</feature>
<feature type="helix" evidence="11">
    <location>
        <begin position="104"/>
        <end position="121"/>
    </location>
</feature>
<feature type="strand" evidence="11">
    <location>
        <begin position="124"/>
        <end position="129"/>
    </location>
</feature>
<feature type="helix" evidence="11">
    <location>
        <begin position="132"/>
        <end position="134"/>
    </location>
</feature>
<feature type="strand" evidence="11">
    <location>
        <begin position="143"/>
        <end position="147"/>
    </location>
</feature>
<feature type="helix" evidence="11">
    <location>
        <begin position="155"/>
        <end position="160"/>
    </location>
</feature>
<feature type="helix" evidence="11">
    <location>
        <begin position="164"/>
        <end position="182"/>
    </location>
</feature>
<feature type="strand" evidence="11">
    <location>
        <begin position="187"/>
        <end position="192"/>
    </location>
</feature>
<feature type="strand" evidence="11">
    <location>
        <begin position="194"/>
        <end position="197"/>
    </location>
</feature>
<feature type="strand" evidence="11">
    <location>
        <begin position="200"/>
        <end position="202"/>
    </location>
</feature>
<feature type="helix" evidence="11">
    <location>
        <begin position="206"/>
        <end position="215"/>
    </location>
</feature>
<feature type="strand" evidence="11">
    <location>
        <begin position="220"/>
        <end position="222"/>
    </location>
</feature>
<feature type="strand" evidence="11">
    <location>
        <begin position="226"/>
        <end position="231"/>
    </location>
</feature>
<feature type="helix" evidence="11">
    <location>
        <begin position="232"/>
        <end position="244"/>
    </location>
</feature>
<feature type="strand" evidence="11">
    <location>
        <begin position="250"/>
        <end position="254"/>
    </location>
</feature>
<feature type="strand" evidence="11">
    <location>
        <begin position="257"/>
        <end position="260"/>
    </location>
</feature>
<feature type="helix" evidence="11">
    <location>
        <begin position="261"/>
        <end position="271"/>
    </location>
</feature>
<feature type="strand" evidence="11">
    <location>
        <begin position="280"/>
        <end position="282"/>
    </location>
</feature>
<feature type="helix" evidence="11">
    <location>
        <begin position="297"/>
        <end position="301"/>
    </location>
</feature>
<feature type="helix" evidence="11">
    <location>
        <begin position="309"/>
        <end position="322"/>
    </location>
</feature>
<organism>
    <name type="scientific">Medicago truncatula</name>
    <name type="common">Barrel medic</name>
    <name type="synonym">Medicago tribuloides</name>
    <dbReference type="NCBI Taxonomy" id="3880"/>
    <lineage>
        <taxon>Eukaryota</taxon>
        <taxon>Viridiplantae</taxon>
        <taxon>Streptophyta</taxon>
        <taxon>Embryophyta</taxon>
        <taxon>Tracheophyta</taxon>
        <taxon>Spermatophyta</taxon>
        <taxon>Magnoliopsida</taxon>
        <taxon>eudicotyledons</taxon>
        <taxon>Gunneridae</taxon>
        <taxon>Pentapetalae</taxon>
        <taxon>rosids</taxon>
        <taxon>fabids</taxon>
        <taxon>Fabales</taxon>
        <taxon>Fabaceae</taxon>
        <taxon>Papilionoideae</taxon>
        <taxon>50 kb inversion clade</taxon>
        <taxon>NPAAA clade</taxon>
        <taxon>Hologalegina</taxon>
        <taxon>IRL clade</taxon>
        <taxon>Trifolieae</taxon>
        <taxon>Medicago</taxon>
    </lineage>
</organism>
<gene>
    <name evidence="6" type="primary">CCR2</name>
    <name evidence="9" type="ordered locus">MTR_4g006940</name>
    <name evidence="10" type="ORF">MtrunA17_Chr4g0001321</name>
</gene>
<reference key="1">
    <citation type="journal article" date="2011" name="Nature">
        <title>The Medicago genome provides insight into the evolution of rhizobial symbioses.</title>
        <authorList>
            <person name="Young N.D."/>
            <person name="Debelle F."/>
            <person name="Oldroyd G.E.D."/>
            <person name="Geurts R."/>
            <person name="Cannon S.B."/>
            <person name="Udvardi M.K."/>
            <person name="Benedito V.A."/>
            <person name="Mayer K.F.X."/>
            <person name="Gouzy J."/>
            <person name="Schoof H."/>
            <person name="Van de Peer Y."/>
            <person name="Proost S."/>
            <person name="Cook D.R."/>
            <person name="Meyers B.C."/>
            <person name="Spannagl M."/>
            <person name="Cheung F."/>
            <person name="De Mita S."/>
            <person name="Krishnakumar V."/>
            <person name="Gundlach H."/>
            <person name="Zhou S."/>
            <person name="Mudge J."/>
            <person name="Bharti A.K."/>
            <person name="Murray J.D."/>
            <person name="Naoumkina M.A."/>
            <person name="Rosen B."/>
            <person name="Silverstein K.A.T."/>
            <person name="Tang H."/>
            <person name="Rombauts S."/>
            <person name="Zhao P.X."/>
            <person name="Zhou P."/>
            <person name="Barbe V."/>
            <person name="Bardou P."/>
            <person name="Bechner M."/>
            <person name="Bellec A."/>
            <person name="Berger A."/>
            <person name="Berges H."/>
            <person name="Bidwell S."/>
            <person name="Bisseling T."/>
            <person name="Choisne N."/>
            <person name="Couloux A."/>
            <person name="Denny R."/>
            <person name="Deshpande S."/>
            <person name="Dai X."/>
            <person name="Doyle J.J."/>
            <person name="Dudez A.-M."/>
            <person name="Farmer A.D."/>
            <person name="Fouteau S."/>
            <person name="Franken C."/>
            <person name="Gibelin C."/>
            <person name="Gish J."/>
            <person name="Goldstein S."/>
            <person name="Gonzalez A.J."/>
            <person name="Green P.J."/>
            <person name="Hallab A."/>
            <person name="Hartog M."/>
            <person name="Hua A."/>
            <person name="Humphray S.J."/>
            <person name="Jeong D.-H."/>
            <person name="Jing Y."/>
            <person name="Jocker A."/>
            <person name="Kenton S.M."/>
            <person name="Kim D.-J."/>
            <person name="Klee K."/>
            <person name="Lai H."/>
            <person name="Lang C."/>
            <person name="Lin S."/>
            <person name="Macmil S.L."/>
            <person name="Magdelenat G."/>
            <person name="Matthews L."/>
            <person name="McCorrison J."/>
            <person name="Monaghan E.L."/>
            <person name="Mun J.-H."/>
            <person name="Najar F.Z."/>
            <person name="Nicholson C."/>
            <person name="Noirot C."/>
            <person name="O'Bleness M."/>
            <person name="Paule C.R."/>
            <person name="Poulain J."/>
            <person name="Prion F."/>
            <person name="Qin B."/>
            <person name="Qu C."/>
            <person name="Retzel E.F."/>
            <person name="Riddle C."/>
            <person name="Sallet E."/>
            <person name="Samain S."/>
            <person name="Samson N."/>
            <person name="Sanders I."/>
            <person name="Saurat O."/>
            <person name="Scarpelli C."/>
            <person name="Schiex T."/>
            <person name="Segurens B."/>
            <person name="Severin A.J."/>
            <person name="Sherrier D.J."/>
            <person name="Shi R."/>
            <person name="Sims S."/>
            <person name="Singer S.R."/>
            <person name="Sinharoy S."/>
            <person name="Sterck L."/>
            <person name="Viollet A."/>
            <person name="Wang B.-B."/>
            <person name="Wang K."/>
            <person name="Wang M."/>
            <person name="Wang X."/>
            <person name="Warfsmann J."/>
            <person name="Weissenbach J."/>
            <person name="White D.D."/>
            <person name="White J.D."/>
            <person name="Wiley G.B."/>
            <person name="Wincker P."/>
            <person name="Xing Y."/>
            <person name="Yang L."/>
            <person name="Yao Z."/>
            <person name="Ying F."/>
            <person name="Zhai J."/>
            <person name="Zhou L."/>
            <person name="Zuber A."/>
            <person name="Denarie J."/>
            <person name="Dixon R.A."/>
            <person name="May G.D."/>
            <person name="Schwartz D.C."/>
            <person name="Rogers J."/>
            <person name="Quetier F."/>
            <person name="Town C.D."/>
            <person name="Roe B.A."/>
        </authorList>
    </citation>
    <scope>NUCLEOTIDE SEQUENCE [LARGE SCALE GENOMIC DNA]</scope>
    <source>
        <strain>cv. Jemalong A17</strain>
    </source>
</reference>
<reference key="2">
    <citation type="journal article" date="2014" name="BMC Genomics">
        <title>An improved genome release (version Mt4.0) for the model legume Medicago truncatula.</title>
        <authorList>
            <person name="Tang H."/>
            <person name="Krishnakumar V."/>
            <person name="Bidwell S."/>
            <person name="Rosen B."/>
            <person name="Chan A."/>
            <person name="Zhou S."/>
            <person name="Gentzbittel L."/>
            <person name="Childs K.L."/>
            <person name="Yandell M."/>
            <person name="Gundlach H."/>
            <person name="Mayer K.F."/>
            <person name="Schwartz D.C."/>
            <person name="Town C.D."/>
        </authorList>
    </citation>
    <scope>GENOME REANNOTATION</scope>
    <source>
        <strain>cv. Jemalong A17</strain>
    </source>
</reference>
<reference key="3">
    <citation type="journal article" date="2018" name="Nat. Plants">
        <title>Whole-genome landscape of Medicago truncatula symbiotic genes.</title>
        <authorList>
            <person name="Pecrix Y."/>
            <person name="Staton S.E."/>
            <person name="Sallet E."/>
            <person name="Lelandais-Briere C."/>
            <person name="Moreau S."/>
            <person name="Carrere S."/>
            <person name="Blein T."/>
            <person name="Jardinaud M.F."/>
            <person name="Latrasse D."/>
            <person name="Zouine M."/>
            <person name="Zahm M."/>
            <person name="Kreplak J."/>
            <person name="Mayjonade B."/>
            <person name="Satge C."/>
            <person name="Perez M."/>
            <person name="Cauet S."/>
            <person name="Marande W."/>
            <person name="Chantry-Darmon C."/>
            <person name="Lopez-Roques C."/>
            <person name="Bouchez O."/>
            <person name="Berard A."/>
            <person name="Debelle F."/>
            <person name="Munos S."/>
            <person name="Bendahmane A."/>
            <person name="Berges H."/>
            <person name="Niebel A."/>
            <person name="Buitink J."/>
            <person name="Frugier F."/>
            <person name="Benhamed M."/>
            <person name="Crespi M."/>
            <person name="Gouzy J."/>
            <person name="Gamas P."/>
        </authorList>
    </citation>
    <scope>NUCLEOTIDE SEQUENCE [LARGE SCALE GENOMIC DNA]</scope>
    <source>
        <strain>cv. Jemalong A17</strain>
        <tissue>Leaf</tissue>
    </source>
</reference>
<reference key="4">
    <citation type="submission" date="2012-05" db="EMBL/GenBank/DDBJ databases">
        <authorList>
            <person name="Krishnakumar V."/>
            <person name="Cheung F."/>
            <person name="Xiao Y."/>
            <person name="Chan A."/>
            <person name="Moskal W.A."/>
            <person name="Town C.D."/>
        </authorList>
    </citation>
    <scope>NUCLEOTIDE SEQUENCE [LARGE SCALE MRNA]</scope>
</reference>
<reference key="5">
    <citation type="journal article" date="2010" name="Proc. Natl. Acad. Sci. U.S.A.">
        <title>Distinct cinnamoyl CoA reductases involved in parallel routes to lignin in Medicago truncatula.</title>
        <authorList>
            <person name="Zhou R."/>
            <person name="Jackson L."/>
            <person name="Shadle G."/>
            <person name="Nakashima J."/>
            <person name="Temple S."/>
            <person name="Chen F."/>
            <person name="Dixon R.A."/>
        </authorList>
    </citation>
    <scope>FUNCTION</scope>
    <scope>DISRUPTION PHENOTYPE</scope>
    <scope>CATALYTIC ACTIVITY</scope>
    <scope>BIOPHYSICOCHEMICAL PROPERTIES</scope>
    <scope>TISSUE SPECIFICITY</scope>
</reference>
<reference key="6">
    <citation type="journal article" date="2014" name="Plant Cell">
        <title>Structural studies of cinnamoyl-CoA reductase and cinnamyl-alcohol dehydrogenase, key enzymes of monolignol biosynthesis.</title>
        <authorList>
            <person name="Pan H."/>
            <person name="Zhou R."/>
            <person name="Louie G.V."/>
            <person name="Muhlemann J.K."/>
            <person name="Bomati E.K."/>
            <person name="Bowman M.E."/>
            <person name="Dudareva N."/>
            <person name="Dixon R.A."/>
            <person name="Noel J.P."/>
            <person name="Wang X."/>
        </authorList>
    </citation>
    <scope>X-RAY CRYSTALLOGRAPHY (2.18 ANGSTROMS) OF 5-336</scope>
</reference>
<sequence>MPAYDNTSSVSGGDQTVCVTGAGGFIASWLVKLLLERGYTVRGTVRNPEDPKNGHLKELEGARERLTLHKVDLLDLQSIQSVVHGCHGVFHTASPVTDNPDEMLEPAVNGTKNVIIASAEAKVRRVVFTSSIGTVYMDPNTSRDVVVDESYWSDLEHCKNTKNWYCYGKTVAEQSAWDIAKENQVDLVVVNPVVVLGPLLQPTINASTIHILKYLNGAAKTYVNATQSYVHVKDVALAHLLVYETNSASGRYICCETALHRGEVVEILAKYFPEYPLPTKCSDEKNPRVKPYKFSNQKLKDLGLEFTPVKQCLYDTVRSLQEKGHLPIPPMQEDSA</sequence>
<keyword id="KW-0002">3D-structure</keyword>
<keyword id="KW-0963">Cytoplasm</keyword>
<keyword id="KW-1015">Disulfide bond</keyword>
<keyword id="KW-0521">NADP</keyword>
<keyword id="KW-0560">Oxidoreductase</keyword>
<keyword id="KW-1185">Reference proteome</keyword>
<protein>
    <recommendedName>
        <fullName evidence="6">Cinnamoyl-CoA reductase 2</fullName>
        <shortName evidence="6">Mt-CCR2</shortName>
        <ecNumber evidence="4 5">1.2.1.44</ecNumber>
    </recommendedName>
    <alternativeName>
        <fullName evidence="8">Caffeoyl-CoA reductase</fullName>
        <ecNumber evidence="4 5">1.2.1.-</ecNumber>
    </alternativeName>
    <alternativeName>
        <fullName evidence="8">Coumaroyl-CoA reductase</fullName>
    </alternativeName>
    <alternativeName>
        <fullName evidence="8">Feruloyl-CoA reductase</fullName>
    </alternativeName>
    <alternativeName>
        <fullName evidence="8">Sinapoyl-CoA reductase</fullName>
    </alternativeName>
</protein>
<evidence type="ECO:0000250" key="1">
    <source>
        <dbReference type="UniProtKB" id="A0A059TC02"/>
    </source>
</evidence>
<evidence type="ECO:0000250" key="2">
    <source>
        <dbReference type="UniProtKB" id="Q12068"/>
    </source>
</evidence>
<evidence type="ECO:0000250" key="3">
    <source>
        <dbReference type="UniProtKB" id="Q9S9N9"/>
    </source>
</evidence>
<evidence type="ECO:0000269" key="4">
    <source>
    </source>
</evidence>
<evidence type="ECO:0000269" key="5">
    <source>
    </source>
</evidence>
<evidence type="ECO:0000303" key="6">
    <source>
    </source>
</evidence>
<evidence type="ECO:0000305" key="7"/>
<evidence type="ECO:0000305" key="8">
    <source>
    </source>
</evidence>
<evidence type="ECO:0000312" key="9">
    <source>
        <dbReference type="EMBL" id="AES86435.1"/>
    </source>
</evidence>
<evidence type="ECO:0000312" key="10">
    <source>
        <dbReference type="EMBL" id="RHN58334.1"/>
    </source>
</evidence>
<evidence type="ECO:0007829" key="11">
    <source>
        <dbReference type="PDB" id="4R1U"/>
    </source>
</evidence>
<proteinExistence type="evidence at protein level"/>
<comment type="function">
    <text evidence="1 4">Involved in the latter stages of lignin biosynthesis (PubMed:20876124). Catalyzes one of the last steps of monolignol biosynthesis, the conversion of cinnamoyl-CoAs into their corresponding cinnamaldehydes (PubMed:20876124). Mediates the conversion of caffeoyl-CoA and coumaroyl-CoA to caffaldehyde and coumaraldehyde, respectively (PubMed:20876124). Also active, with a lower efficiency, toward feruloyl-CoA and sinapoyl-CoA (PubMed:20876124). Involved in the production of floral volatile phenylpropanoids in flowers of fragrant cultivars from cinnamic acid, a common precursor with the anthocyanin biosynthesis pathway involved in flower pigmentation (By similarity).</text>
</comment>
<comment type="catalytic activity">
    <reaction evidence="4">
        <text>(E)-coniferaldehyde + NADP(+) + CoA = (E)-feruloyl-CoA + NADPH + H(+)</text>
        <dbReference type="Rhea" id="RHEA:64648"/>
        <dbReference type="ChEBI" id="CHEBI:15378"/>
        <dbReference type="ChEBI" id="CHEBI:16547"/>
        <dbReference type="ChEBI" id="CHEBI:57287"/>
        <dbReference type="ChEBI" id="CHEBI:57783"/>
        <dbReference type="ChEBI" id="CHEBI:58349"/>
        <dbReference type="ChEBI" id="CHEBI:87305"/>
        <dbReference type="EC" id="1.2.1.44"/>
    </reaction>
    <physiologicalReaction direction="right-to-left" evidence="4">
        <dbReference type="Rhea" id="RHEA:64650"/>
    </physiologicalReaction>
</comment>
<comment type="catalytic activity">
    <reaction evidence="4">
        <text>(E)-4-coumaraldehyde + NADP(+) + CoA = (E)-4-coumaroyl-CoA + NADPH + H(+)</text>
        <dbReference type="Rhea" id="RHEA:64652"/>
        <dbReference type="ChEBI" id="CHEBI:15378"/>
        <dbReference type="ChEBI" id="CHEBI:28353"/>
        <dbReference type="ChEBI" id="CHEBI:57287"/>
        <dbReference type="ChEBI" id="CHEBI:57783"/>
        <dbReference type="ChEBI" id="CHEBI:58349"/>
        <dbReference type="ChEBI" id="CHEBI:85008"/>
        <dbReference type="EC" id="1.2.1.44"/>
    </reaction>
    <physiologicalReaction direction="right-to-left" evidence="4">
        <dbReference type="Rhea" id="RHEA:64654"/>
    </physiologicalReaction>
</comment>
<comment type="catalytic activity">
    <reaction evidence="4">
        <text>(E)-sinapaldehyde + NADP(+) + CoA = (E)-sinapoyl-CoA + NADPH + H(+)</text>
        <dbReference type="Rhea" id="RHEA:64656"/>
        <dbReference type="ChEBI" id="CHEBI:15378"/>
        <dbReference type="ChEBI" id="CHEBI:27949"/>
        <dbReference type="ChEBI" id="CHEBI:57287"/>
        <dbReference type="ChEBI" id="CHEBI:57393"/>
        <dbReference type="ChEBI" id="CHEBI:57783"/>
        <dbReference type="ChEBI" id="CHEBI:58349"/>
        <dbReference type="EC" id="1.2.1.44"/>
    </reaction>
    <physiologicalReaction direction="right-to-left" evidence="4">
        <dbReference type="Rhea" id="RHEA:64658"/>
    </physiologicalReaction>
</comment>
<comment type="catalytic activity">
    <reaction evidence="3">
        <text>(E)-cinnamaldehyde + NADP(+) + CoA = (E)-cinnamoyl-CoA + NADPH + H(+)</text>
        <dbReference type="Rhea" id="RHEA:10620"/>
        <dbReference type="ChEBI" id="CHEBI:15378"/>
        <dbReference type="ChEBI" id="CHEBI:16731"/>
        <dbReference type="ChEBI" id="CHEBI:57252"/>
        <dbReference type="ChEBI" id="CHEBI:57287"/>
        <dbReference type="ChEBI" id="CHEBI:57783"/>
        <dbReference type="ChEBI" id="CHEBI:58349"/>
        <dbReference type="EC" id="1.2.1.44"/>
    </reaction>
    <physiologicalReaction direction="right-to-left" evidence="3">
        <dbReference type="Rhea" id="RHEA:10622"/>
    </physiologicalReaction>
</comment>
<comment type="catalytic activity">
    <reaction evidence="4">
        <text>(E)-caffeyl aldehyde + NADP(+) + CoA = (E)-caffeoyl-CoA + NADPH + H(+)</text>
        <dbReference type="Rhea" id="RHEA:74867"/>
        <dbReference type="ChEBI" id="CHEBI:15378"/>
        <dbReference type="ChEBI" id="CHEBI:28323"/>
        <dbReference type="ChEBI" id="CHEBI:57287"/>
        <dbReference type="ChEBI" id="CHEBI:57783"/>
        <dbReference type="ChEBI" id="CHEBI:58349"/>
        <dbReference type="ChEBI" id="CHEBI:87136"/>
    </reaction>
    <physiologicalReaction direction="right-to-left" evidence="4">
        <dbReference type="Rhea" id="RHEA:74869"/>
    </physiologicalReaction>
</comment>
<comment type="biophysicochemical properties">
    <kinetics>
        <KM evidence="4">44.5 uM for feruloyl-CoA (at pH 6.25 and 30 degrees Celsius)</KM>
        <KM evidence="4">32.7 uM for sinapoyl-CoA (at pH 6.25 and 30 degrees Celsius)</KM>
        <KM evidence="4">23.4 uM for caffeoyl-CoA (at pH 6.25 and 30 degrees Celsius)</KM>
        <KM evidence="4">12.4 uM for coumaroyl-CoA (at pH 6.25 and 30 degrees Celsius)</KM>
        <Vmax evidence="4">0.48 umol/min/mg enzyme with feruloyl-CoA as substrate (at pH 6.25 and 30 degrees Celsius)</Vmax>
        <Vmax evidence="4">0.32 umol/min/mg enzyme with sinapoyl-CoA as substrate (at pH 6.25 and 30 degrees Celsius)</Vmax>
        <Vmax evidence="4">0.35 umol/min/mg enzyme with caffeoyl-CoA as substrate (at pH 6.25 and 30 degrees Celsius)</Vmax>
        <Vmax evidence="4">0.44 umol/min/mg enzyme with coumaroyl-CoA as substrate (at pH 6.25 and 30 degrees Celsius)</Vmax>
        <text evidence="4">kcat is 18.1 min(-1) with feruloyl-CoA as substrate (at pH 6.25 and 30 degrees Celsius) (PubMed:20876124). kcat is 12.0 min(-1) with sinapoyl-CoA as substrate (at pH 6.25 and 30 degrees Celsius) (PubMed:20876124). kcat is 9.0 min(-1) with caffeoyl-CoA as substrate (at pH 6.25 and 30 degrees Celsius) (PubMed:20876124). kcat is 17.4 min(-1) with coumaroyl-CoA as substrate (at pH 6.25 and 30 degrees Celsius) (PubMed:20876124).</text>
    </kinetics>
</comment>
<comment type="pathway">
    <text evidence="1">Aromatic compound metabolism; phenylpropanoid biosynthesis.</text>
</comment>
<comment type="subcellular location">
    <subcellularLocation>
        <location evidence="1">Cytoplasm</location>
    </subcellularLocation>
</comment>
<comment type="tissue specificity">
    <text evidence="4">Mainly expressed in roots and stems, especially at the second internode and, to a lower extent, in leaves and flowers (PubMed:20876124). Localized in vascular elements, with weaker expression in the interfascicular (xylem fiber) region (PubMed:20876124).</text>
</comment>
<comment type="PTM">
    <text evidence="1">The formation of a reversible disulfide bond reduces activity by perturbing the positioning of nearby catalytic residues.</text>
</comment>
<comment type="disruption phenotype">
    <text evidence="4">Normal growth with moderate reduction in lignin levels (PubMed:20876124). Increased expression of caffeoyl CoA 3-O-methyltransferase (CCoAOMT) (PubMed:20876124).</text>
</comment>
<comment type="similarity">
    <text evidence="7">Belongs to the NAD(P)-dependent epimerase/dehydratase family. Dihydroflavonol-4-reductase subfamily.</text>
</comment>
<accession>G7JEE5</accession>
<accession>I3SLG0</accession>
<accession>I3T9D9</accession>
<name>CCR2_MEDTR</name>